<reference key="1">
    <citation type="submission" date="1998-09" db="EMBL/GenBank/DDBJ databases">
        <title>Lysis gene modules in the phage P22 gene pool.</title>
        <authorList>
            <person name="Zimmer A."/>
            <person name="Schmieger H."/>
        </authorList>
    </citation>
    <scope>NUCLEOTIDE SEQUENCE [GENOMIC DNA]</scope>
</reference>
<name>ENLYS_BPPS3</name>
<evidence type="ECO:0000255" key="1"/>
<evidence type="ECO:0000255" key="2">
    <source>
        <dbReference type="HAMAP-Rule" id="MF_04136"/>
    </source>
</evidence>
<organism>
    <name type="scientific">Bacteriophage PS34</name>
    <dbReference type="NCBI Taxonomy" id="83127"/>
    <lineage>
        <taxon>Viruses</taxon>
        <taxon>Duplodnaviria</taxon>
        <taxon>Heunggongvirae</taxon>
        <taxon>Uroviricota</taxon>
        <taxon>Caudoviricetes</taxon>
    </lineage>
</organism>
<comment type="function">
    <text evidence="2">Signal-arrest-release (SAR) endolysin with lysozyme activity that degrades host peptidoglycans and participates with the pinholin and spanin proteins in the sequential events which lead to programmed host cell lysis releasing the mature viral particles. Once the pinholin has permeabilized the host cell membrane, the SAR-endolysin is released into the periplasm where it breaks down the peptidoglycan layer.</text>
</comment>
<comment type="catalytic activity">
    <reaction evidence="2">
        <text>Hydrolysis of (1-&gt;4)-beta-linkages between N-acetylmuramic acid and N-acetyl-D-glucosamine residues in a peptidoglycan and between N-acetyl-D-glucosamine residues in chitodextrins.</text>
        <dbReference type="EC" id="3.2.1.17"/>
    </reaction>
</comment>
<comment type="subcellular location">
    <subcellularLocation>
        <location evidence="2">Host cell inner membrane</location>
        <topology evidence="2">Single-pass type II membrane protein</topology>
        <orientation evidence="2">Periplasmic side</orientation>
    </subcellularLocation>
    <text evidence="2">Secreted as a signal-anchored, membrane-tethered, inactive endolysin which is subsequently refolded, activated and released by membrane depolarization driven by the pinholin.</text>
</comment>
<comment type="domain">
    <text evidence="2">The signal-anchor, which may also be an uncleaved signal sequence tethers the SAR-endolysin to the membrane until the latter is depolarized by the holin, resulting in the escape of SAR-endolysin from the membrane.</text>
</comment>
<comment type="similarity">
    <text evidence="2">Belongs to the glycosyl hydrolase 24 family.</text>
</comment>
<organismHost>
    <name type="scientific">Salmonella typhimurium</name>
    <dbReference type="NCBI Taxonomy" id="90371"/>
</organismHost>
<protein>
    <recommendedName>
        <fullName evidence="2">SAR-endolysin</fullName>
        <ecNumber evidence="2">3.2.1.17</ecNumber>
    </recommendedName>
    <alternativeName>
        <fullName evidence="2">Endolysin</fullName>
    </alternativeName>
    <alternativeName>
        <fullName>Gene product 19</fullName>
        <shortName>gp19</shortName>
    </alternativeName>
    <alternativeName>
        <fullName evidence="2">Lysis protein</fullName>
    </alternativeName>
    <alternativeName>
        <fullName evidence="2">Lysozyme</fullName>
    </alternativeName>
    <alternativeName>
        <fullName evidence="2">Muramidase</fullName>
    </alternativeName>
</protein>
<gene>
    <name type="primary">19</name>
</gene>
<dbReference type="EC" id="3.2.1.17" evidence="2"/>
<dbReference type="EMBL" id="AJ011580">
    <property type="protein sequence ID" value="CAA09706.1"/>
    <property type="molecule type" value="Genomic_DNA"/>
</dbReference>
<dbReference type="SMR" id="O80288"/>
<dbReference type="CAZy" id="GH24">
    <property type="family name" value="Glycoside Hydrolase Family 24"/>
</dbReference>
<dbReference type="GO" id="GO:0020002">
    <property type="term" value="C:host cell plasma membrane"/>
    <property type="evidence" value="ECO:0007669"/>
    <property type="project" value="UniProtKB-SubCell"/>
</dbReference>
<dbReference type="GO" id="GO:0016020">
    <property type="term" value="C:membrane"/>
    <property type="evidence" value="ECO:0007669"/>
    <property type="project" value="UniProtKB-KW"/>
</dbReference>
<dbReference type="GO" id="GO:0003796">
    <property type="term" value="F:lysozyme activity"/>
    <property type="evidence" value="ECO:0007669"/>
    <property type="project" value="UniProtKB-EC"/>
</dbReference>
<dbReference type="GO" id="GO:0016998">
    <property type="term" value="P:cell wall macromolecule catabolic process"/>
    <property type="evidence" value="ECO:0007669"/>
    <property type="project" value="InterPro"/>
</dbReference>
<dbReference type="GO" id="GO:0042742">
    <property type="term" value="P:defense response to bacterium"/>
    <property type="evidence" value="ECO:0007669"/>
    <property type="project" value="UniProtKB-KW"/>
</dbReference>
<dbReference type="GO" id="GO:0031640">
    <property type="term" value="P:killing of cells of another organism"/>
    <property type="evidence" value="ECO:0007669"/>
    <property type="project" value="UniProtKB-KW"/>
</dbReference>
<dbReference type="GO" id="GO:0009253">
    <property type="term" value="P:peptidoglycan catabolic process"/>
    <property type="evidence" value="ECO:0007669"/>
    <property type="project" value="InterPro"/>
</dbReference>
<dbReference type="CDD" id="cd16900">
    <property type="entry name" value="endolysin_R21-like"/>
    <property type="match status" value="1"/>
</dbReference>
<dbReference type="Gene3D" id="1.10.530.40">
    <property type="match status" value="1"/>
</dbReference>
<dbReference type="HAMAP" id="MF_04110">
    <property type="entry name" value="ENDOLYSIN_T4"/>
    <property type="match status" value="1"/>
</dbReference>
<dbReference type="HAMAP" id="MF_04136">
    <property type="entry name" value="SAR_ENDOLYSIN"/>
    <property type="match status" value="1"/>
</dbReference>
<dbReference type="InterPro" id="IPR051018">
    <property type="entry name" value="Bacteriophage_GH24"/>
</dbReference>
<dbReference type="InterPro" id="IPR034690">
    <property type="entry name" value="Endolysin_T4_type"/>
</dbReference>
<dbReference type="InterPro" id="IPR002196">
    <property type="entry name" value="Glyco_hydro_24"/>
</dbReference>
<dbReference type="InterPro" id="IPR023346">
    <property type="entry name" value="Lysozyme-like_dom_sf"/>
</dbReference>
<dbReference type="InterPro" id="IPR023347">
    <property type="entry name" value="Lysozyme_dom_sf"/>
</dbReference>
<dbReference type="InterPro" id="IPR043688">
    <property type="entry name" value="SAR_endolysin-like"/>
</dbReference>
<dbReference type="PANTHER" id="PTHR38107">
    <property type="match status" value="1"/>
</dbReference>
<dbReference type="PANTHER" id="PTHR38107:SF3">
    <property type="entry name" value="LYSOZYME RRRD-RELATED"/>
    <property type="match status" value="1"/>
</dbReference>
<dbReference type="Pfam" id="PF00959">
    <property type="entry name" value="Phage_lysozyme"/>
    <property type="match status" value="1"/>
</dbReference>
<dbReference type="SUPFAM" id="SSF53955">
    <property type="entry name" value="Lysozyme-like"/>
    <property type="match status" value="1"/>
</dbReference>
<sequence>MAMSPAVRNSVIAAISGGAIAIASVLITGPGGNDGLEGVRYKPYKDVVGVLTVCYGHTGKDIMPGKTYTEAECKALLNKDLATVARQINPYIKVDIPETTRGGIYSFVYNVGAGNFETSTLLRKINQVDIKGACDQLRRWTYAGGKQWKGLMTRREIEREVCLWGQQ</sequence>
<accession>O80288</accession>
<feature type="chain" id="PRO_0000218104" description="SAR-endolysin">
    <location>
        <begin position="1"/>
        <end position="167"/>
    </location>
</feature>
<feature type="transmembrane region" description="Helical; Signal-anchor for type II membrane protein" evidence="1">
    <location>
        <begin position="11"/>
        <end position="31"/>
    </location>
</feature>
<feature type="active site" description="Proton donor/acceptor" evidence="2">
    <location>
        <position position="37"/>
    </location>
</feature>
<feature type="active site" description="Proton donor/acceptor" evidence="2">
    <location>
        <position position="46"/>
    </location>
</feature>
<proteinExistence type="inferred from homology"/>
<keyword id="KW-0929">Antimicrobial</keyword>
<keyword id="KW-0081">Bacteriolytic enzyme</keyword>
<keyword id="KW-0204">Cytolysis</keyword>
<keyword id="KW-0326">Glycosidase</keyword>
<keyword id="KW-1030">Host cell inner membrane</keyword>
<keyword id="KW-0578">Host cell lysis by virus</keyword>
<keyword id="KW-1032">Host cell membrane</keyword>
<keyword id="KW-1043">Host membrane</keyword>
<keyword id="KW-0378">Hydrolase</keyword>
<keyword id="KW-0472">Membrane</keyword>
<keyword id="KW-0735">Signal-anchor</keyword>
<keyword id="KW-0812">Transmembrane</keyword>
<keyword id="KW-1133">Transmembrane helix</keyword>
<keyword id="KW-1188">Viral release from host cell</keyword>